<dbReference type="EC" id="1.1.1.37" evidence="1"/>
<dbReference type="EMBL" id="AE002160">
    <property type="protein sequence ID" value="AAF39479.1"/>
    <property type="molecule type" value="Genomic_DNA"/>
</dbReference>
<dbReference type="PIR" id="C81678">
    <property type="entry name" value="C81678"/>
</dbReference>
<dbReference type="RefSeq" id="WP_010231127.1">
    <property type="nucleotide sequence ID" value="NZ_CP027217.1"/>
</dbReference>
<dbReference type="SMR" id="Q9PK18"/>
<dbReference type="GeneID" id="1246016"/>
<dbReference type="KEGG" id="cmu:TC_0655"/>
<dbReference type="eggNOG" id="COG0039">
    <property type="taxonomic scope" value="Bacteria"/>
</dbReference>
<dbReference type="HOGENOM" id="CLU_040727_2_0_0"/>
<dbReference type="OrthoDB" id="9802969at2"/>
<dbReference type="Proteomes" id="UP000000800">
    <property type="component" value="Chromosome"/>
</dbReference>
<dbReference type="GO" id="GO:0030060">
    <property type="term" value="F:L-malate dehydrogenase (NAD+) activity"/>
    <property type="evidence" value="ECO:0007669"/>
    <property type="project" value="UniProtKB-UniRule"/>
</dbReference>
<dbReference type="GO" id="GO:0006108">
    <property type="term" value="P:malate metabolic process"/>
    <property type="evidence" value="ECO:0007669"/>
    <property type="project" value="InterPro"/>
</dbReference>
<dbReference type="GO" id="GO:0006099">
    <property type="term" value="P:tricarboxylic acid cycle"/>
    <property type="evidence" value="ECO:0007669"/>
    <property type="project" value="UniProtKB-UniRule"/>
</dbReference>
<dbReference type="FunFam" id="3.40.50.720:FF:000010">
    <property type="entry name" value="Malate dehydrogenase"/>
    <property type="match status" value="1"/>
</dbReference>
<dbReference type="FunFam" id="3.90.110.10:FF:000002">
    <property type="entry name" value="Malate dehydrogenase"/>
    <property type="match status" value="1"/>
</dbReference>
<dbReference type="Gene3D" id="3.90.110.10">
    <property type="entry name" value="Lactate dehydrogenase/glycoside hydrolase, family 4, C-terminal"/>
    <property type="match status" value="1"/>
</dbReference>
<dbReference type="Gene3D" id="3.40.50.720">
    <property type="entry name" value="NAD(P)-binding Rossmann-like Domain"/>
    <property type="match status" value="1"/>
</dbReference>
<dbReference type="HAMAP" id="MF_01517">
    <property type="entry name" value="Malate_dehydrog_2"/>
    <property type="match status" value="1"/>
</dbReference>
<dbReference type="InterPro" id="IPR001557">
    <property type="entry name" value="L-lactate/malate_DH"/>
</dbReference>
<dbReference type="InterPro" id="IPR022383">
    <property type="entry name" value="Lactate/malate_DH_C"/>
</dbReference>
<dbReference type="InterPro" id="IPR001236">
    <property type="entry name" value="Lactate/malate_DH_N"/>
</dbReference>
<dbReference type="InterPro" id="IPR015955">
    <property type="entry name" value="Lactate_DH/Glyco_Ohase_4_C"/>
</dbReference>
<dbReference type="InterPro" id="IPR010945">
    <property type="entry name" value="Malate_DH_type2"/>
</dbReference>
<dbReference type="InterPro" id="IPR036291">
    <property type="entry name" value="NAD(P)-bd_dom_sf"/>
</dbReference>
<dbReference type="NCBIfam" id="TIGR01759">
    <property type="entry name" value="MalateDH-SF1"/>
    <property type="match status" value="1"/>
</dbReference>
<dbReference type="NCBIfam" id="NF003916">
    <property type="entry name" value="PRK05442.1"/>
    <property type="match status" value="1"/>
</dbReference>
<dbReference type="PANTHER" id="PTHR23382">
    <property type="entry name" value="MALATE DEHYDROGENASE"/>
    <property type="match status" value="1"/>
</dbReference>
<dbReference type="Pfam" id="PF02866">
    <property type="entry name" value="Ldh_1_C"/>
    <property type="match status" value="1"/>
</dbReference>
<dbReference type="Pfam" id="PF00056">
    <property type="entry name" value="Ldh_1_N"/>
    <property type="match status" value="1"/>
</dbReference>
<dbReference type="PIRSF" id="PIRSF000102">
    <property type="entry name" value="Lac_mal_DH"/>
    <property type="match status" value="1"/>
</dbReference>
<dbReference type="SUPFAM" id="SSF56327">
    <property type="entry name" value="LDH C-terminal domain-like"/>
    <property type="match status" value="1"/>
</dbReference>
<dbReference type="SUPFAM" id="SSF51735">
    <property type="entry name" value="NAD(P)-binding Rossmann-fold domains"/>
    <property type="match status" value="1"/>
</dbReference>
<comment type="function">
    <text evidence="1">Catalyzes the reversible oxidation of malate to oxaloacetate.</text>
</comment>
<comment type="catalytic activity">
    <reaction evidence="1">
        <text>(S)-malate + NAD(+) = oxaloacetate + NADH + H(+)</text>
        <dbReference type="Rhea" id="RHEA:21432"/>
        <dbReference type="ChEBI" id="CHEBI:15378"/>
        <dbReference type="ChEBI" id="CHEBI:15589"/>
        <dbReference type="ChEBI" id="CHEBI:16452"/>
        <dbReference type="ChEBI" id="CHEBI:57540"/>
        <dbReference type="ChEBI" id="CHEBI:57945"/>
        <dbReference type="EC" id="1.1.1.37"/>
    </reaction>
</comment>
<comment type="similarity">
    <text evidence="1">Belongs to the LDH/MDH superfamily. MDH type 2 family.</text>
</comment>
<proteinExistence type="inferred from homology"/>
<evidence type="ECO:0000255" key="1">
    <source>
        <dbReference type="HAMAP-Rule" id="MF_01517"/>
    </source>
</evidence>
<protein>
    <recommendedName>
        <fullName evidence="1">Malate dehydrogenase</fullName>
        <ecNumber evidence="1">1.1.1.37</ecNumber>
    </recommendedName>
</protein>
<sequence>MFSQTVSVAVTGGTGQIAYCFLFALAHGDIFGPDTGIDLRIYDIPGTERSLSGVRMELDDGAFPLLQRVQVTTSLHDAFDDIDAAFLIGSVPRGPGMERRDLLKKNGEIFATQGKVLNTAAKREAKIFVVGNPVNTNCWIAMNHAPRLLRKNFHAMLRLDQNRMHSMLAHRAEVPLSAVSQVVVWGNHSAKQVPDFTQALIHGRPIVETIADRDWLENIMVPSVQSRGSAVIEARGKSSAASAARALAEAARSIYQPKEGEWFSSGVCSDNNPYGLPEDIIFGFPCRMLGTGEYEIVPGLPWDAFIRGKMQISLDEILQEKASVSL</sequence>
<keyword id="KW-0520">NAD</keyword>
<keyword id="KW-0560">Oxidoreductase</keyword>
<keyword id="KW-0816">Tricarboxylic acid cycle</keyword>
<organism>
    <name type="scientific">Chlamydia muridarum (strain MoPn / Nigg)</name>
    <dbReference type="NCBI Taxonomy" id="243161"/>
    <lineage>
        <taxon>Bacteria</taxon>
        <taxon>Pseudomonadati</taxon>
        <taxon>Chlamydiota</taxon>
        <taxon>Chlamydiia</taxon>
        <taxon>Chlamydiales</taxon>
        <taxon>Chlamydiaceae</taxon>
        <taxon>Chlamydia/Chlamydophila group</taxon>
        <taxon>Chlamydia</taxon>
    </lineage>
</organism>
<reference key="1">
    <citation type="journal article" date="2000" name="Nucleic Acids Res.">
        <title>Genome sequences of Chlamydia trachomatis MoPn and Chlamydia pneumoniae AR39.</title>
        <authorList>
            <person name="Read T.D."/>
            <person name="Brunham R.C."/>
            <person name="Shen C."/>
            <person name="Gill S.R."/>
            <person name="Heidelberg J.F."/>
            <person name="White O."/>
            <person name="Hickey E.K."/>
            <person name="Peterson J.D."/>
            <person name="Utterback T.R."/>
            <person name="Berry K.J."/>
            <person name="Bass S."/>
            <person name="Linher K.D."/>
            <person name="Weidman J.F."/>
            <person name="Khouri H.M."/>
            <person name="Craven B."/>
            <person name="Bowman C."/>
            <person name="Dodson R.J."/>
            <person name="Gwinn M.L."/>
            <person name="Nelson W.C."/>
            <person name="DeBoy R.T."/>
            <person name="Kolonay J.F."/>
            <person name="McClarty G."/>
            <person name="Salzberg S.L."/>
            <person name="Eisen J.A."/>
            <person name="Fraser C.M."/>
        </authorList>
    </citation>
    <scope>NUCLEOTIDE SEQUENCE [LARGE SCALE GENOMIC DNA]</scope>
    <source>
        <strain>MoPn / Nigg</strain>
    </source>
</reference>
<name>MDH_CHLMU</name>
<accession>Q9PK18</accession>
<gene>
    <name evidence="1" type="primary">mdh</name>
    <name type="ordered locus">TC_0655</name>
</gene>
<feature type="chain" id="PRO_0000113357" description="Malate dehydrogenase">
    <location>
        <begin position="1"/>
        <end position="326"/>
    </location>
</feature>
<feature type="active site" description="Proton acceptor" evidence="1">
    <location>
        <position position="188"/>
    </location>
</feature>
<feature type="binding site" evidence="1">
    <location>
        <begin position="12"/>
        <end position="18"/>
    </location>
    <ligand>
        <name>NAD(+)</name>
        <dbReference type="ChEBI" id="CHEBI:57540"/>
    </ligand>
</feature>
<feature type="binding site" evidence="1">
    <location>
        <position position="93"/>
    </location>
    <ligand>
        <name>substrate</name>
    </ligand>
</feature>
<feature type="binding site" evidence="1">
    <location>
        <position position="99"/>
    </location>
    <ligand>
        <name>substrate</name>
    </ligand>
</feature>
<feature type="binding site" evidence="1">
    <location>
        <position position="106"/>
    </location>
    <ligand>
        <name>NAD(+)</name>
        <dbReference type="ChEBI" id="CHEBI:57540"/>
    </ligand>
</feature>
<feature type="binding site" evidence="1">
    <location>
        <position position="113"/>
    </location>
    <ligand>
        <name>NAD(+)</name>
        <dbReference type="ChEBI" id="CHEBI:57540"/>
    </ligand>
</feature>
<feature type="binding site" evidence="1">
    <location>
        <begin position="130"/>
        <end position="132"/>
    </location>
    <ligand>
        <name>NAD(+)</name>
        <dbReference type="ChEBI" id="CHEBI:57540"/>
    </ligand>
</feature>
<feature type="binding site" evidence="1">
    <location>
        <position position="132"/>
    </location>
    <ligand>
        <name>substrate</name>
    </ligand>
</feature>
<feature type="binding site" evidence="1">
    <location>
        <position position="163"/>
    </location>
    <ligand>
        <name>substrate</name>
    </ligand>
</feature>